<comment type="function">
    <text evidence="1">Part of a sulfur-relay system required for 2-thiolation of 5-methylaminomethyl-2-thiouridine (mnm(5)s(2)U) at tRNA wobble positions. Accepts sulfur from TusA and transfers it in turn to TusE.</text>
</comment>
<comment type="subunit">
    <text evidence="1">Heterohexamer, formed by a dimer of trimers. The hexameric TusBCD complex contains 2 copies each of TusB, TusC and TusD. The TusBCD complex interacts with TusE.</text>
</comment>
<comment type="subcellular location">
    <subcellularLocation>
        <location evidence="1">Cytoplasm</location>
    </subcellularLocation>
</comment>
<comment type="similarity">
    <text evidence="1">Belongs to the DsrE/TusD family.</text>
</comment>
<proteinExistence type="inferred from homology"/>
<dbReference type="EC" id="2.8.1.-" evidence="1"/>
<dbReference type="EMBL" id="CU928161">
    <property type="protein sequence ID" value="CAR04949.1"/>
    <property type="molecule type" value="Genomic_DNA"/>
</dbReference>
<dbReference type="RefSeq" id="WP_001209702.1">
    <property type="nucleotide sequence ID" value="NC_011742.1"/>
</dbReference>
<dbReference type="SMR" id="B7MCW0"/>
<dbReference type="KEGG" id="ecz:ECS88_3733"/>
<dbReference type="HOGENOM" id="CLU_132095_0_0_6"/>
<dbReference type="Proteomes" id="UP000000747">
    <property type="component" value="Chromosome"/>
</dbReference>
<dbReference type="GO" id="GO:1990228">
    <property type="term" value="C:sulfurtransferase complex"/>
    <property type="evidence" value="ECO:0007669"/>
    <property type="project" value="TreeGrafter"/>
</dbReference>
<dbReference type="GO" id="GO:0097163">
    <property type="term" value="F:sulfur carrier activity"/>
    <property type="evidence" value="ECO:0007669"/>
    <property type="project" value="TreeGrafter"/>
</dbReference>
<dbReference type="GO" id="GO:0016783">
    <property type="term" value="F:sulfurtransferase activity"/>
    <property type="evidence" value="ECO:0007669"/>
    <property type="project" value="UniProtKB-UniRule"/>
</dbReference>
<dbReference type="GO" id="GO:0002143">
    <property type="term" value="P:tRNA wobble position uridine thiolation"/>
    <property type="evidence" value="ECO:0007669"/>
    <property type="project" value="TreeGrafter"/>
</dbReference>
<dbReference type="FunFam" id="3.40.1260.10:FF:000001">
    <property type="entry name" value="Sulfurtransferase TusD"/>
    <property type="match status" value="1"/>
</dbReference>
<dbReference type="Gene3D" id="3.40.1260.10">
    <property type="entry name" value="DsrEFH-like"/>
    <property type="match status" value="1"/>
</dbReference>
<dbReference type="HAMAP" id="MF_00390">
    <property type="entry name" value="Thiourid_synth_D"/>
    <property type="match status" value="1"/>
</dbReference>
<dbReference type="InterPro" id="IPR027396">
    <property type="entry name" value="DsrEFH-like"/>
</dbReference>
<dbReference type="InterPro" id="IPR003787">
    <property type="entry name" value="Sulphur_relay_DsrE/F-like"/>
</dbReference>
<dbReference type="InterPro" id="IPR017463">
    <property type="entry name" value="Sulphur_relay_TusD/DsrE"/>
</dbReference>
<dbReference type="NCBIfam" id="NF001237">
    <property type="entry name" value="PRK00207.1"/>
    <property type="match status" value="1"/>
</dbReference>
<dbReference type="NCBIfam" id="TIGR03012">
    <property type="entry name" value="sulf_tusD_dsrE"/>
    <property type="match status" value="1"/>
</dbReference>
<dbReference type="PANTHER" id="PTHR34874">
    <property type="entry name" value="PROTEIN YCHN"/>
    <property type="match status" value="1"/>
</dbReference>
<dbReference type="PANTHER" id="PTHR34874:SF3">
    <property type="entry name" value="SULFURTRANSFERASE TUSD"/>
    <property type="match status" value="1"/>
</dbReference>
<dbReference type="Pfam" id="PF02635">
    <property type="entry name" value="DsrE"/>
    <property type="match status" value="1"/>
</dbReference>
<dbReference type="SUPFAM" id="SSF75169">
    <property type="entry name" value="DsrEFH-like"/>
    <property type="match status" value="1"/>
</dbReference>
<name>TUSD_ECO45</name>
<protein>
    <recommendedName>
        <fullName evidence="1">Sulfurtransferase TusD</fullName>
        <ecNumber evidence="1">2.8.1.-</ecNumber>
    </recommendedName>
    <alternativeName>
        <fullName evidence="1">tRNA 2-thiouridine synthesizing protein D</fullName>
    </alternativeName>
</protein>
<keyword id="KW-0963">Cytoplasm</keyword>
<keyword id="KW-1185">Reference proteome</keyword>
<keyword id="KW-0808">Transferase</keyword>
<keyword id="KW-0819">tRNA processing</keyword>
<sequence>MRFAIVVTGPAYGTQQASSAFQFAQALIAEGHELSSVFFYREGVYNANQLTSPASDEFDLVRSWQQLNMQHGVALNICVAAALRRGVVDETEAGRLGLASSNLQTGFTLSGLGALAEASLTCDRVVQF</sequence>
<reference key="1">
    <citation type="journal article" date="2009" name="PLoS Genet.">
        <title>Organised genome dynamics in the Escherichia coli species results in highly diverse adaptive paths.</title>
        <authorList>
            <person name="Touchon M."/>
            <person name="Hoede C."/>
            <person name="Tenaillon O."/>
            <person name="Barbe V."/>
            <person name="Baeriswyl S."/>
            <person name="Bidet P."/>
            <person name="Bingen E."/>
            <person name="Bonacorsi S."/>
            <person name="Bouchier C."/>
            <person name="Bouvet O."/>
            <person name="Calteau A."/>
            <person name="Chiapello H."/>
            <person name="Clermont O."/>
            <person name="Cruveiller S."/>
            <person name="Danchin A."/>
            <person name="Diard M."/>
            <person name="Dossat C."/>
            <person name="Karoui M.E."/>
            <person name="Frapy E."/>
            <person name="Garry L."/>
            <person name="Ghigo J.M."/>
            <person name="Gilles A.M."/>
            <person name="Johnson J."/>
            <person name="Le Bouguenec C."/>
            <person name="Lescat M."/>
            <person name="Mangenot S."/>
            <person name="Martinez-Jehanne V."/>
            <person name="Matic I."/>
            <person name="Nassif X."/>
            <person name="Oztas S."/>
            <person name="Petit M.A."/>
            <person name="Pichon C."/>
            <person name="Rouy Z."/>
            <person name="Ruf C.S."/>
            <person name="Schneider D."/>
            <person name="Tourret J."/>
            <person name="Vacherie B."/>
            <person name="Vallenet D."/>
            <person name="Medigue C."/>
            <person name="Rocha E.P.C."/>
            <person name="Denamur E."/>
        </authorList>
    </citation>
    <scope>NUCLEOTIDE SEQUENCE [LARGE SCALE GENOMIC DNA]</scope>
    <source>
        <strain>S88 / ExPEC</strain>
    </source>
</reference>
<accession>B7MCW0</accession>
<gene>
    <name evidence="1" type="primary">tusD</name>
    <name type="ordered locus">ECS88_3733</name>
</gene>
<evidence type="ECO:0000255" key="1">
    <source>
        <dbReference type="HAMAP-Rule" id="MF_00390"/>
    </source>
</evidence>
<feature type="chain" id="PRO_1000122856" description="Sulfurtransferase TusD">
    <location>
        <begin position="1"/>
        <end position="128"/>
    </location>
</feature>
<feature type="active site" description="Cysteine persulfide intermediate" evidence="1">
    <location>
        <position position="78"/>
    </location>
</feature>
<organism>
    <name type="scientific">Escherichia coli O45:K1 (strain S88 / ExPEC)</name>
    <dbReference type="NCBI Taxonomy" id="585035"/>
    <lineage>
        <taxon>Bacteria</taxon>
        <taxon>Pseudomonadati</taxon>
        <taxon>Pseudomonadota</taxon>
        <taxon>Gammaproteobacteria</taxon>
        <taxon>Enterobacterales</taxon>
        <taxon>Enterobacteriaceae</taxon>
        <taxon>Escherichia</taxon>
    </lineage>
</organism>